<comment type="function">
    <text evidence="1">Component of the acetyl coenzyme A carboxylase (ACC) complex. Biotin carboxylase (BC) catalyzes the carboxylation of biotin on its carrier protein (BCCP) and then the CO(2) group is transferred by the transcarboxylase to acetyl-CoA to form malonyl-CoA.</text>
</comment>
<comment type="catalytic activity">
    <reaction evidence="1">
        <text>N(6)-carboxybiotinyl-L-lysyl-[protein] + acetyl-CoA = N(6)-biotinyl-L-lysyl-[protein] + malonyl-CoA</text>
        <dbReference type="Rhea" id="RHEA:54728"/>
        <dbReference type="Rhea" id="RHEA-COMP:10505"/>
        <dbReference type="Rhea" id="RHEA-COMP:10506"/>
        <dbReference type="ChEBI" id="CHEBI:57288"/>
        <dbReference type="ChEBI" id="CHEBI:57384"/>
        <dbReference type="ChEBI" id="CHEBI:83144"/>
        <dbReference type="ChEBI" id="CHEBI:83145"/>
        <dbReference type="EC" id="2.1.3.15"/>
    </reaction>
</comment>
<comment type="cofactor">
    <cofactor evidence="1">
        <name>Zn(2+)</name>
        <dbReference type="ChEBI" id="CHEBI:29105"/>
    </cofactor>
    <text evidence="1">Binds 1 zinc ion per subunit.</text>
</comment>
<comment type="pathway">
    <text evidence="1">Lipid metabolism; malonyl-CoA biosynthesis; malonyl-CoA from acetyl-CoA: step 1/1.</text>
</comment>
<comment type="subunit">
    <text evidence="1">Acetyl-CoA carboxylase is a heterohexamer composed of biotin carboxyl carrier protein (AccB), biotin carboxylase (AccC) and two subunits each of ACCase subunit alpha (AccA) and ACCase subunit beta (AccD).</text>
</comment>
<comment type="subcellular location">
    <subcellularLocation>
        <location evidence="1">Cytoplasm</location>
    </subcellularLocation>
</comment>
<comment type="similarity">
    <text evidence="1">Belongs to the AccD/PCCB family.</text>
</comment>
<reference key="1">
    <citation type="journal article" date="2011" name="J. Bacteriol.">
        <title>Comparative genomics of 28 Salmonella enterica isolates: evidence for CRISPR-mediated adaptive sublineage evolution.</title>
        <authorList>
            <person name="Fricke W.F."/>
            <person name="Mammel M.K."/>
            <person name="McDermott P.F."/>
            <person name="Tartera C."/>
            <person name="White D.G."/>
            <person name="Leclerc J.E."/>
            <person name="Ravel J."/>
            <person name="Cebula T.A."/>
        </authorList>
    </citation>
    <scope>NUCLEOTIDE SEQUENCE [LARGE SCALE GENOMIC DNA]</scope>
    <source>
        <strain>CVM19633</strain>
    </source>
</reference>
<sequence length="304" mass="33216">MSWIERIKSNITPTRKASIPEGVWTKCDSCGQVLYRAELERNLEVCPKCDHHMRMSARNRLHSLLDEGSLVELGSELEPKDVLKFRDSKKYKDRLASAQKETGEKDALVVMKGTLHGMPVVAAAFEFAFMGGSMGSVVGARFVRAVEQALEDNCPLVCFSASGGARMQEALMSLMQMAKTSAALAKMQERGLPYISVLTDPTMGGVSASFAMLGDLNIAEPKALIGFAGPRVIEQTVREKLPPGFQRSEFLIEKGAIDMIVRRPEMRLKLASILAKLMNLPAPNPDAPREGVVVPPAPDQESEA</sequence>
<keyword id="KW-0067">ATP-binding</keyword>
<keyword id="KW-0963">Cytoplasm</keyword>
<keyword id="KW-0275">Fatty acid biosynthesis</keyword>
<keyword id="KW-0276">Fatty acid metabolism</keyword>
<keyword id="KW-0444">Lipid biosynthesis</keyword>
<keyword id="KW-0443">Lipid metabolism</keyword>
<keyword id="KW-0479">Metal-binding</keyword>
<keyword id="KW-0547">Nucleotide-binding</keyword>
<keyword id="KW-0808">Transferase</keyword>
<keyword id="KW-0862">Zinc</keyword>
<keyword id="KW-0863">Zinc-finger</keyword>
<feature type="chain" id="PRO_0000359059" description="Acetyl-coenzyme A carboxylase carboxyl transferase subunit beta">
    <location>
        <begin position="1"/>
        <end position="304"/>
    </location>
</feature>
<feature type="domain" description="CoA carboxyltransferase N-terminal" evidence="2">
    <location>
        <begin position="23"/>
        <end position="292"/>
    </location>
</feature>
<feature type="zinc finger region" description="C4-type" evidence="1">
    <location>
        <begin position="27"/>
        <end position="49"/>
    </location>
</feature>
<feature type="region of interest" description="Disordered" evidence="3">
    <location>
        <begin position="283"/>
        <end position="304"/>
    </location>
</feature>
<feature type="binding site" evidence="1">
    <location>
        <position position="27"/>
    </location>
    <ligand>
        <name>Zn(2+)</name>
        <dbReference type="ChEBI" id="CHEBI:29105"/>
    </ligand>
</feature>
<feature type="binding site" evidence="1">
    <location>
        <position position="30"/>
    </location>
    <ligand>
        <name>Zn(2+)</name>
        <dbReference type="ChEBI" id="CHEBI:29105"/>
    </ligand>
</feature>
<feature type="binding site" evidence="1">
    <location>
        <position position="46"/>
    </location>
    <ligand>
        <name>Zn(2+)</name>
        <dbReference type="ChEBI" id="CHEBI:29105"/>
    </ligand>
</feature>
<feature type="binding site" evidence="1">
    <location>
        <position position="49"/>
    </location>
    <ligand>
        <name>Zn(2+)</name>
        <dbReference type="ChEBI" id="CHEBI:29105"/>
    </ligand>
</feature>
<dbReference type="EC" id="2.1.3.15" evidence="1"/>
<dbReference type="EMBL" id="CP001127">
    <property type="protein sequence ID" value="ACF88762.1"/>
    <property type="molecule type" value="Genomic_DNA"/>
</dbReference>
<dbReference type="RefSeq" id="WP_000118383.1">
    <property type="nucleotide sequence ID" value="NC_011094.1"/>
</dbReference>
<dbReference type="SMR" id="B4TQA2"/>
<dbReference type="KEGG" id="sew:SeSA_A2596"/>
<dbReference type="HOGENOM" id="CLU_015486_1_0_6"/>
<dbReference type="UniPathway" id="UPA00655">
    <property type="reaction ID" value="UER00711"/>
</dbReference>
<dbReference type="Proteomes" id="UP000001865">
    <property type="component" value="Chromosome"/>
</dbReference>
<dbReference type="GO" id="GO:0009329">
    <property type="term" value="C:acetate CoA-transferase complex"/>
    <property type="evidence" value="ECO:0007669"/>
    <property type="project" value="TreeGrafter"/>
</dbReference>
<dbReference type="GO" id="GO:0003989">
    <property type="term" value="F:acetyl-CoA carboxylase activity"/>
    <property type="evidence" value="ECO:0007669"/>
    <property type="project" value="InterPro"/>
</dbReference>
<dbReference type="GO" id="GO:0005524">
    <property type="term" value="F:ATP binding"/>
    <property type="evidence" value="ECO:0007669"/>
    <property type="project" value="UniProtKB-KW"/>
</dbReference>
<dbReference type="GO" id="GO:0016743">
    <property type="term" value="F:carboxyl- or carbamoyltransferase activity"/>
    <property type="evidence" value="ECO:0007669"/>
    <property type="project" value="UniProtKB-UniRule"/>
</dbReference>
<dbReference type="GO" id="GO:0008270">
    <property type="term" value="F:zinc ion binding"/>
    <property type="evidence" value="ECO:0007669"/>
    <property type="project" value="UniProtKB-UniRule"/>
</dbReference>
<dbReference type="GO" id="GO:0006633">
    <property type="term" value="P:fatty acid biosynthetic process"/>
    <property type="evidence" value="ECO:0007669"/>
    <property type="project" value="UniProtKB-KW"/>
</dbReference>
<dbReference type="GO" id="GO:2001295">
    <property type="term" value="P:malonyl-CoA biosynthetic process"/>
    <property type="evidence" value="ECO:0007669"/>
    <property type="project" value="UniProtKB-UniRule"/>
</dbReference>
<dbReference type="FunFam" id="3.90.226.10:FF:000013">
    <property type="entry name" value="Acetyl-coenzyme A carboxylase carboxyl transferase subunit beta"/>
    <property type="match status" value="1"/>
</dbReference>
<dbReference type="Gene3D" id="3.90.226.10">
    <property type="entry name" value="2-enoyl-CoA Hydratase, Chain A, domain 1"/>
    <property type="match status" value="1"/>
</dbReference>
<dbReference type="HAMAP" id="MF_01395">
    <property type="entry name" value="AcetylCoA_CT_beta"/>
    <property type="match status" value="1"/>
</dbReference>
<dbReference type="InterPro" id="IPR034733">
    <property type="entry name" value="AcCoA_carboxyl_beta"/>
</dbReference>
<dbReference type="InterPro" id="IPR000438">
    <property type="entry name" value="Acetyl_CoA_COase_Trfase_b_su"/>
</dbReference>
<dbReference type="InterPro" id="IPR029045">
    <property type="entry name" value="ClpP/crotonase-like_dom_sf"/>
</dbReference>
<dbReference type="InterPro" id="IPR011762">
    <property type="entry name" value="COA_CT_N"/>
</dbReference>
<dbReference type="InterPro" id="IPR041010">
    <property type="entry name" value="Znf-ACC"/>
</dbReference>
<dbReference type="NCBIfam" id="TIGR00515">
    <property type="entry name" value="accD"/>
    <property type="match status" value="1"/>
</dbReference>
<dbReference type="PANTHER" id="PTHR42995">
    <property type="entry name" value="ACETYL-COENZYME A CARBOXYLASE CARBOXYL TRANSFERASE SUBUNIT BETA, CHLOROPLASTIC"/>
    <property type="match status" value="1"/>
</dbReference>
<dbReference type="PANTHER" id="PTHR42995:SF5">
    <property type="entry name" value="ACETYL-COENZYME A CARBOXYLASE CARBOXYL TRANSFERASE SUBUNIT BETA, CHLOROPLASTIC"/>
    <property type="match status" value="1"/>
</dbReference>
<dbReference type="Pfam" id="PF01039">
    <property type="entry name" value="Carboxyl_trans"/>
    <property type="match status" value="1"/>
</dbReference>
<dbReference type="Pfam" id="PF17848">
    <property type="entry name" value="Zn_ribbon_ACC"/>
    <property type="match status" value="1"/>
</dbReference>
<dbReference type="PRINTS" id="PR01070">
    <property type="entry name" value="ACCCTRFRASEB"/>
</dbReference>
<dbReference type="SUPFAM" id="SSF52096">
    <property type="entry name" value="ClpP/crotonase"/>
    <property type="match status" value="1"/>
</dbReference>
<dbReference type="PROSITE" id="PS50980">
    <property type="entry name" value="COA_CT_NTER"/>
    <property type="match status" value="1"/>
</dbReference>
<evidence type="ECO:0000255" key="1">
    <source>
        <dbReference type="HAMAP-Rule" id="MF_01395"/>
    </source>
</evidence>
<evidence type="ECO:0000255" key="2">
    <source>
        <dbReference type="PROSITE-ProRule" id="PRU01136"/>
    </source>
</evidence>
<evidence type="ECO:0000256" key="3">
    <source>
        <dbReference type="SAM" id="MobiDB-lite"/>
    </source>
</evidence>
<proteinExistence type="inferred from homology"/>
<accession>B4TQA2</accession>
<name>ACCD_SALSV</name>
<gene>
    <name evidence="1" type="primary">accD</name>
    <name type="ordered locus">SeSA_A2596</name>
</gene>
<organism>
    <name type="scientific">Salmonella schwarzengrund (strain CVM19633)</name>
    <dbReference type="NCBI Taxonomy" id="439843"/>
    <lineage>
        <taxon>Bacteria</taxon>
        <taxon>Pseudomonadati</taxon>
        <taxon>Pseudomonadota</taxon>
        <taxon>Gammaproteobacteria</taxon>
        <taxon>Enterobacterales</taxon>
        <taxon>Enterobacteriaceae</taxon>
        <taxon>Salmonella</taxon>
    </lineage>
</organism>
<protein>
    <recommendedName>
        <fullName evidence="1">Acetyl-coenzyme A carboxylase carboxyl transferase subunit beta</fullName>
        <shortName evidence="1">ACCase subunit beta</shortName>
        <shortName evidence="1">Acetyl-CoA carboxylase carboxyltransferase subunit beta</shortName>
        <ecNumber evidence="1">2.1.3.15</ecNumber>
    </recommendedName>
</protein>